<proteinExistence type="evidence at transcript level"/>
<dbReference type="EMBL" id="AB189043">
    <property type="protein sequence ID" value="BAD38859.1"/>
    <property type="molecule type" value="mRNA"/>
</dbReference>
<dbReference type="EMBL" id="CM000128">
    <property type="status" value="NOT_ANNOTATED_CDS"/>
    <property type="molecule type" value="Genomic_DNA"/>
</dbReference>
<dbReference type="SMR" id="A2XFB7"/>
<dbReference type="STRING" id="39946.A2XFB7"/>
<dbReference type="Proteomes" id="UP000007015">
    <property type="component" value="Chromosome 3"/>
</dbReference>
<dbReference type="GO" id="GO:0005634">
    <property type="term" value="C:nucleus"/>
    <property type="evidence" value="ECO:0007669"/>
    <property type="project" value="UniProtKB-SubCell"/>
</dbReference>
<dbReference type="GO" id="GO:0009736">
    <property type="term" value="P:cytokinin-activated signaling pathway"/>
    <property type="evidence" value="ECO:0007669"/>
    <property type="project" value="InterPro"/>
</dbReference>
<dbReference type="GO" id="GO:0000160">
    <property type="term" value="P:phosphorelay signal transduction system"/>
    <property type="evidence" value="ECO:0007669"/>
    <property type="project" value="UniProtKB-KW"/>
</dbReference>
<dbReference type="GO" id="GO:0048511">
    <property type="term" value="P:rhythmic process"/>
    <property type="evidence" value="ECO:0007669"/>
    <property type="project" value="UniProtKB-KW"/>
</dbReference>
<dbReference type="CDD" id="cd17582">
    <property type="entry name" value="psREC_PRR"/>
    <property type="match status" value="1"/>
</dbReference>
<dbReference type="FunFam" id="3.40.50.2300:FF:000214">
    <property type="entry name" value="Two-component response regulator-like PRR37"/>
    <property type="match status" value="1"/>
</dbReference>
<dbReference type="Gene3D" id="3.40.50.2300">
    <property type="match status" value="1"/>
</dbReference>
<dbReference type="InterPro" id="IPR045279">
    <property type="entry name" value="ARR-like"/>
</dbReference>
<dbReference type="InterPro" id="IPR010402">
    <property type="entry name" value="CCT_domain"/>
</dbReference>
<dbReference type="InterPro" id="IPR011006">
    <property type="entry name" value="CheY-like_superfamily"/>
</dbReference>
<dbReference type="InterPro" id="IPR001789">
    <property type="entry name" value="Sig_transdc_resp-reg_receiver"/>
</dbReference>
<dbReference type="PANTHER" id="PTHR43874">
    <property type="entry name" value="TWO-COMPONENT RESPONSE REGULATOR"/>
    <property type="match status" value="1"/>
</dbReference>
<dbReference type="PANTHER" id="PTHR43874:SF125">
    <property type="entry name" value="TWO-COMPONENT RESPONSE REGULATOR-LIKE APRR7"/>
    <property type="match status" value="1"/>
</dbReference>
<dbReference type="Pfam" id="PF06203">
    <property type="entry name" value="CCT"/>
    <property type="match status" value="1"/>
</dbReference>
<dbReference type="Pfam" id="PF00072">
    <property type="entry name" value="Response_reg"/>
    <property type="match status" value="1"/>
</dbReference>
<dbReference type="SMART" id="SM00448">
    <property type="entry name" value="REC"/>
    <property type="match status" value="1"/>
</dbReference>
<dbReference type="SUPFAM" id="SSF52172">
    <property type="entry name" value="CheY-like"/>
    <property type="match status" value="1"/>
</dbReference>
<dbReference type="PROSITE" id="PS51017">
    <property type="entry name" value="CCT"/>
    <property type="match status" value="1"/>
</dbReference>
<dbReference type="PROSITE" id="PS50110">
    <property type="entry name" value="RESPONSE_REGULATORY"/>
    <property type="match status" value="1"/>
</dbReference>
<feature type="chain" id="PRO_0000303008" description="Two-component response regulator-like PRR73">
    <location>
        <begin position="1"/>
        <end position="767"/>
    </location>
</feature>
<feature type="domain" description="Response regulatory" evidence="2">
    <location>
        <begin position="82"/>
        <end position="200"/>
    </location>
</feature>
<feature type="domain" description="CCT" evidence="3">
    <location>
        <begin position="712"/>
        <end position="754"/>
    </location>
</feature>
<feature type="region of interest" description="Disordered" evidence="4">
    <location>
        <begin position="1"/>
        <end position="64"/>
    </location>
</feature>
<feature type="region of interest" description="Disordered" evidence="4">
    <location>
        <begin position="205"/>
        <end position="272"/>
    </location>
</feature>
<feature type="region of interest" description="Disordered" evidence="4">
    <location>
        <begin position="312"/>
        <end position="388"/>
    </location>
</feature>
<feature type="region of interest" description="Disordered" evidence="4">
    <location>
        <begin position="476"/>
        <end position="546"/>
    </location>
</feature>
<feature type="region of interest" description="Disordered" evidence="4">
    <location>
        <begin position="646"/>
        <end position="701"/>
    </location>
</feature>
<feature type="region of interest" description="Disordered" evidence="4">
    <location>
        <begin position="727"/>
        <end position="767"/>
    </location>
</feature>
<feature type="compositionally biased region" description="Low complexity" evidence="4">
    <location>
        <begin position="205"/>
        <end position="214"/>
    </location>
</feature>
<feature type="compositionally biased region" description="Acidic residues" evidence="4">
    <location>
        <begin position="238"/>
        <end position="252"/>
    </location>
</feature>
<feature type="compositionally biased region" description="Polar residues" evidence="4">
    <location>
        <begin position="263"/>
        <end position="272"/>
    </location>
</feature>
<feature type="compositionally biased region" description="Polar residues" evidence="4">
    <location>
        <begin position="343"/>
        <end position="361"/>
    </location>
</feature>
<feature type="compositionally biased region" description="Polar residues" evidence="4">
    <location>
        <begin position="488"/>
        <end position="497"/>
    </location>
</feature>
<feature type="compositionally biased region" description="Low complexity" evidence="4">
    <location>
        <begin position="518"/>
        <end position="531"/>
    </location>
</feature>
<feature type="compositionally biased region" description="Polar residues" evidence="4">
    <location>
        <begin position="532"/>
        <end position="543"/>
    </location>
</feature>
<feature type="compositionally biased region" description="Gly residues" evidence="4">
    <location>
        <begin position="689"/>
        <end position="700"/>
    </location>
</feature>
<feature type="compositionally biased region" description="Basic residues" evidence="4">
    <location>
        <begin position="727"/>
        <end position="738"/>
    </location>
</feature>
<feature type="sequence conflict" description="In Ref. 1; BAD38859." evidence="6" ref="1">
    <original>S</original>
    <variation>P</variation>
    <location>
        <position position="33"/>
    </location>
</feature>
<accession>A2XFB7</accession>
<accession>Q689G4</accession>
<accession>Q689G7</accession>
<accession>Q8H8T5</accession>
<organism>
    <name type="scientific">Oryza sativa subsp. indica</name>
    <name type="common">Rice</name>
    <dbReference type="NCBI Taxonomy" id="39946"/>
    <lineage>
        <taxon>Eukaryota</taxon>
        <taxon>Viridiplantae</taxon>
        <taxon>Streptophyta</taxon>
        <taxon>Embryophyta</taxon>
        <taxon>Tracheophyta</taxon>
        <taxon>Spermatophyta</taxon>
        <taxon>Magnoliopsida</taxon>
        <taxon>Liliopsida</taxon>
        <taxon>Poales</taxon>
        <taxon>Poaceae</taxon>
        <taxon>BOP clade</taxon>
        <taxon>Oryzoideae</taxon>
        <taxon>Oryzeae</taxon>
        <taxon>Oryzinae</taxon>
        <taxon>Oryza</taxon>
        <taxon>Oryza sativa</taxon>
    </lineage>
</organism>
<keyword id="KW-0090">Biological rhythms</keyword>
<keyword id="KW-0539">Nucleus</keyword>
<keyword id="KW-1185">Reference proteome</keyword>
<keyword id="KW-0804">Transcription</keyword>
<keyword id="KW-0805">Transcription regulation</keyword>
<keyword id="KW-0902">Two-component regulatory system</keyword>
<gene>
    <name type="primary">PRR73</name>
    <name type="ORF">OsI_010760</name>
</gene>
<protein>
    <recommendedName>
        <fullName>Two-component response regulator-like PRR73</fullName>
    </recommendedName>
    <alternativeName>
        <fullName>Pseudo-response regulator 73</fullName>
        <shortName>OsPRR73</shortName>
    </alternativeName>
</protein>
<evidence type="ECO:0000250" key="1"/>
<evidence type="ECO:0000255" key="2">
    <source>
        <dbReference type="PROSITE-ProRule" id="PRU00169"/>
    </source>
</evidence>
<evidence type="ECO:0000255" key="3">
    <source>
        <dbReference type="PROSITE-ProRule" id="PRU00357"/>
    </source>
</evidence>
<evidence type="ECO:0000256" key="4">
    <source>
        <dbReference type="SAM" id="MobiDB-lite"/>
    </source>
</evidence>
<evidence type="ECO:0000269" key="5">
    <source>
    </source>
</evidence>
<evidence type="ECO:0000305" key="6"/>
<reference key="1">
    <citation type="journal article" date="2005" name="Biosci. Biotechnol. Biochem.">
        <title>Circadian-associated rice pseudo response regulators (OsPRRs): insight into the control of flowering time.</title>
        <authorList>
            <person name="Murakami M."/>
            <person name="Matsushika A."/>
            <person name="Ashikari M."/>
            <person name="Yamashino T."/>
            <person name="Mizuno T."/>
        </authorList>
    </citation>
    <scope>NUCLEOTIDE SEQUENCE [MRNA]</scope>
    <scope>INDUCTION</scope>
    <source>
        <strain>cv. Kasalath</strain>
    </source>
</reference>
<reference key="2">
    <citation type="journal article" date="2005" name="PLoS Biol.">
        <title>The genomes of Oryza sativa: a history of duplications.</title>
        <authorList>
            <person name="Yu J."/>
            <person name="Wang J."/>
            <person name="Lin W."/>
            <person name="Li S."/>
            <person name="Li H."/>
            <person name="Zhou J."/>
            <person name="Ni P."/>
            <person name="Dong W."/>
            <person name="Hu S."/>
            <person name="Zeng C."/>
            <person name="Zhang J."/>
            <person name="Zhang Y."/>
            <person name="Li R."/>
            <person name="Xu Z."/>
            <person name="Li S."/>
            <person name="Li X."/>
            <person name="Zheng H."/>
            <person name="Cong L."/>
            <person name="Lin L."/>
            <person name="Yin J."/>
            <person name="Geng J."/>
            <person name="Li G."/>
            <person name="Shi J."/>
            <person name="Liu J."/>
            <person name="Lv H."/>
            <person name="Li J."/>
            <person name="Wang J."/>
            <person name="Deng Y."/>
            <person name="Ran L."/>
            <person name="Shi X."/>
            <person name="Wang X."/>
            <person name="Wu Q."/>
            <person name="Li C."/>
            <person name="Ren X."/>
            <person name="Wang J."/>
            <person name="Wang X."/>
            <person name="Li D."/>
            <person name="Liu D."/>
            <person name="Zhang X."/>
            <person name="Ji Z."/>
            <person name="Zhao W."/>
            <person name="Sun Y."/>
            <person name="Zhang Z."/>
            <person name="Bao J."/>
            <person name="Han Y."/>
            <person name="Dong L."/>
            <person name="Ji J."/>
            <person name="Chen P."/>
            <person name="Wu S."/>
            <person name="Liu J."/>
            <person name="Xiao Y."/>
            <person name="Bu D."/>
            <person name="Tan J."/>
            <person name="Yang L."/>
            <person name="Ye C."/>
            <person name="Zhang J."/>
            <person name="Xu J."/>
            <person name="Zhou Y."/>
            <person name="Yu Y."/>
            <person name="Zhang B."/>
            <person name="Zhuang S."/>
            <person name="Wei H."/>
            <person name="Liu B."/>
            <person name="Lei M."/>
            <person name="Yu H."/>
            <person name="Li Y."/>
            <person name="Xu H."/>
            <person name="Wei S."/>
            <person name="He X."/>
            <person name="Fang L."/>
            <person name="Zhang Z."/>
            <person name="Zhang Y."/>
            <person name="Huang X."/>
            <person name="Su Z."/>
            <person name="Tong W."/>
            <person name="Li J."/>
            <person name="Tong Z."/>
            <person name="Li S."/>
            <person name="Ye J."/>
            <person name="Wang L."/>
            <person name="Fang L."/>
            <person name="Lei T."/>
            <person name="Chen C.-S."/>
            <person name="Chen H.-C."/>
            <person name="Xu Z."/>
            <person name="Li H."/>
            <person name="Huang H."/>
            <person name="Zhang F."/>
            <person name="Xu H."/>
            <person name="Li N."/>
            <person name="Zhao C."/>
            <person name="Li S."/>
            <person name="Dong L."/>
            <person name="Huang Y."/>
            <person name="Li L."/>
            <person name="Xi Y."/>
            <person name="Qi Q."/>
            <person name="Li W."/>
            <person name="Zhang B."/>
            <person name="Hu W."/>
            <person name="Zhang Y."/>
            <person name="Tian X."/>
            <person name="Jiao Y."/>
            <person name="Liang X."/>
            <person name="Jin J."/>
            <person name="Gao L."/>
            <person name="Zheng W."/>
            <person name="Hao B."/>
            <person name="Liu S.-M."/>
            <person name="Wang W."/>
            <person name="Yuan L."/>
            <person name="Cao M."/>
            <person name="McDermott J."/>
            <person name="Samudrala R."/>
            <person name="Wang J."/>
            <person name="Wong G.K.-S."/>
            <person name="Yang H."/>
        </authorList>
    </citation>
    <scope>NUCLEOTIDE SEQUENCE [LARGE SCALE GENOMIC DNA]</scope>
    <source>
        <strain>cv. 93-11</strain>
    </source>
</reference>
<name>PRR73_ORYSI</name>
<sequence length="767" mass="84097">MGSACEAGTDEPSRDDVKGTGNGILENGHSHKSEEEEWRNGMGEDLPNGHSTPPEPQQTDEQKEHQVRIVRWERFLPVKTLRVLLVENDDSTRQVVSALLRKCCYEVIPAENGLHAWQCLEDLQNHIDLVLTEVVMPRLSGIGLLSKITSHKICKDIPVIMMSSNDSMGTVFKCLSKGAVDFLVKPIRKNELKNLWQHVWRRCHSSSGSGSESGIRTQKCTKPKVDDEYENNSGSNNDNEDDDDNDEDDDDLSVGHNARDGSDNGSGTQSSWTKRAVEIDSPQQMSPDQPSDLPDSTCAQVIHPTSEICSNRWLPTANKRSGKKHKENNDDSMGKYLEIGAPRNSSMEYQSSPREMSVNPTEKQHETLMPQSKTTRETDSRNTQNEPTTQTVDLISSIARSTDDKQVVRINNAPDCSSKVPDGNDKNRDSLIDMTSEELGLKRLKTTGSATEIHDERNILKRSDLSAFTRYHTTVASNQGGAGFGGSCSPQDNSSEALKTDSNCKVKSNSDAAEIKQGSNGSSNNNDMGSSTKNAITKPSSNRGKVISPSAVKATQHTSAFHPVQRQTSPANVVGKDKVDEGIANGVNVGHPVDVQNSFMQHHHHVHYYVHVMTQQQQQPSIERGSSDAQCGSSNVFDPPIEGHAANYSVNGSFSGGHNGNNGQRGPSTAPNVGRPNMETVNGIVDENGAGGGNGSGSGSGNDLYQNGVCYREAALNKFRQKRKVRNFGKKVRYQSRKRLAEQRPRIRGQFVRQSGQEDQAGQDEDR</sequence>
<comment type="function">
    <text evidence="1">Controls photoperiodic flowering response. Seems to be one of the component of the circadian clock. Expression of several members of the ARR-like family is controlled by circadian rhythm. The particular coordinated sequential expression of PRR73, PRR37, PRR95, PRR59 and PPR1 result to circadian waves that may be at the basis of the endogenous circadian clock (By similarity).</text>
</comment>
<comment type="subcellular location">
    <subcellularLocation>
        <location evidence="6">Nucleus</location>
    </subcellularLocation>
</comment>
<comment type="induction">
    <text evidence="5">Expressed with a circadian rhythm showing a broad peak in the middle day.</text>
</comment>
<comment type="similarity">
    <text evidence="6">Belongs to the ARR-like family.</text>
</comment>
<comment type="caution">
    <text evidence="6">Lacks the phospho-accepting Asp (here Glu-133), present in the receiver domain, which is one of the conserved features of two-component response regulators (ARRs) family.</text>
</comment>